<protein>
    <recommendedName>
        <fullName evidence="1">Alanine--tRNA ligase</fullName>
        <ecNumber evidence="1">6.1.1.7</ecNumber>
    </recommendedName>
    <alternativeName>
        <fullName evidence="1">Alanyl-tRNA synthetase</fullName>
        <shortName evidence="1">AlaRS</shortName>
    </alternativeName>
</protein>
<name>SYA_STRPC</name>
<feature type="chain" id="PRO_0000347823" description="Alanine--tRNA ligase">
    <location>
        <begin position="1"/>
        <end position="872"/>
    </location>
</feature>
<feature type="binding site" evidence="1">
    <location>
        <position position="567"/>
    </location>
    <ligand>
        <name>Zn(2+)</name>
        <dbReference type="ChEBI" id="CHEBI:29105"/>
    </ligand>
</feature>
<feature type="binding site" evidence="1">
    <location>
        <position position="571"/>
    </location>
    <ligand>
        <name>Zn(2+)</name>
        <dbReference type="ChEBI" id="CHEBI:29105"/>
    </ligand>
</feature>
<feature type="binding site" evidence="1">
    <location>
        <position position="669"/>
    </location>
    <ligand>
        <name>Zn(2+)</name>
        <dbReference type="ChEBI" id="CHEBI:29105"/>
    </ligand>
</feature>
<feature type="binding site" evidence="1">
    <location>
        <position position="673"/>
    </location>
    <ligand>
        <name>Zn(2+)</name>
        <dbReference type="ChEBI" id="CHEBI:29105"/>
    </ligand>
</feature>
<comment type="function">
    <text evidence="1">Catalyzes the attachment of alanine to tRNA(Ala) in a two-step reaction: alanine is first activated by ATP to form Ala-AMP and then transferred to the acceptor end of tRNA(Ala). Also edits incorrectly charged Ser-tRNA(Ala) and Gly-tRNA(Ala) via its editing domain.</text>
</comment>
<comment type="catalytic activity">
    <reaction evidence="1">
        <text>tRNA(Ala) + L-alanine + ATP = L-alanyl-tRNA(Ala) + AMP + diphosphate</text>
        <dbReference type="Rhea" id="RHEA:12540"/>
        <dbReference type="Rhea" id="RHEA-COMP:9657"/>
        <dbReference type="Rhea" id="RHEA-COMP:9923"/>
        <dbReference type="ChEBI" id="CHEBI:30616"/>
        <dbReference type="ChEBI" id="CHEBI:33019"/>
        <dbReference type="ChEBI" id="CHEBI:57972"/>
        <dbReference type="ChEBI" id="CHEBI:78442"/>
        <dbReference type="ChEBI" id="CHEBI:78497"/>
        <dbReference type="ChEBI" id="CHEBI:456215"/>
        <dbReference type="EC" id="6.1.1.7"/>
    </reaction>
</comment>
<comment type="cofactor">
    <cofactor evidence="1">
        <name>Zn(2+)</name>
        <dbReference type="ChEBI" id="CHEBI:29105"/>
    </cofactor>
    <text evidence="1">Binds 1 zinc ion per subunit.</text>
</comment>
<comment type="subcellular location">
    <subcellularLocation>
        <location evidence="1">Cytoplasm</location>
    </subcellularLocation>
</comment>
<comment type="domain">
    <text evidence="1">Consists of three domains; the N-terminal catalytic domain, the editing domain and the C-terminal C-Ala domain. The editing domain removes incorrectly charged amino acids, while the C-Ala domain, along with tRNA(Ala), serves as a bridge to cooperatively bring together the editing and aminoacylation centers thus stimulating deacylation of misacylated tRNAs.</text>
</comment>
<comment type="similarity">
    <text evidence="1">Belongs to the class-II aminoacyl-tRNA synthetase family.</text>
</comment>
<sequence>MKELSSAQIRQMWLDFWKSKGHCVEPSANLVPVNDPTLLWINSGVATLKKYFDGSVIPENPRITNAQKSIRTNDIENVGKTARHHTMFEMLGNFSIGDYFRDEAIEWGFELLTSPDWFDFPKDKLYMTYYPDDKDSYNRWIACGVEPSHLVPIEDNFWEIGAGPSGPDTEIFFDRGEDFDPENIGLRLLAEDIENDRYIEIWNIVLSQFNADPAVPRSEYKELPNKNIDTGAGLERLAAVMQGAKTNFETDLFMPIIREVEKLSGKTYNPDGDNMSFKVIADHIRALSFAIGDGALPGNEGRGYVLRRLLRRAVMHGRRLGINETFLYKLVPTVGQIMESYYPEVLEKHDFIEKIVKREEETFARTIDAGSGHLDSLLAQLKAEGKDTLEGKDIFKLYDTYGFPVELTEELAEDAGYKIDHEGFKSAMKEQQDRARAAVVKGGSMGMQNETLAGIVEESRFEYDTYSLESSLSVIIADNERTEAVSEGQALLVFAQTPFYAEMGGQVADTGRIKNDKGDTVAEVVDVQKAPNGQPLHTVNVLASLSVGTNYTLEINKERRLAVEKNHTATHLLHAALHNVIGEHATQAGSLNEEEFLRFDFTHFEAVSNEELRHIEQEVNEQIWNALTITTTETDVETAKEMGAMALFGEKYGKVVRVVQIGNYSVELCGGTHLNNSSEIGLFKIVKEEGIGSGTRRIIAVTGRQAFEAYRNQEDALKEIAATVKAPQLKDAAAKVQALSDSLRDLQKENAELKEKAAAAAAGDVFKDVQEAKGVRFIASQVDVADAGALRTFADNWKQKDYSDVLVLVAAIGEKVNVLVASKTKDVHAGNMIKELAPIVAGRGGGKPDMAMAGGSDASKIAELLAAVAETV</sequence>
<reference key="1">
    <citation type="journal article" date="2006" name="Proc. Natl. Acad. Sci. U.S.A.">
        <title>Molecular genetic anatomy of inter- and intraserotype variation in the human bacterial pathogen group A Streptococcus.</title>
        <authorList>
            <person name="Beres S.B."/>
            <person name="Richter E.W."/>
            <person name="Nagiec M.J."/>
            <person name="Sumby P."/>
            <person name="Porcella S.F."/>
            <person name="DeLeo F.R."/>
            <person name="Musser J.M."/>
        </authorList>
    </citation>
    <scope>NUCLEOTIDE SEQUENCE [LARGE SCALE GENOMIC DNA]</scope>
    <source>
        <strain>MGAS9429</strain>
    </source>
</reference>
<proteinExistence type="inferred from homology"/>
<accession>Q1JL53</accession>
<evidence type="ECO:0000255" key="1">
    <source>
        <dbReference type="HAMAP-Rule" id="MF_00036"/>
    </source>
</evidence>
<gene>
    <name evidence="1" type="primary">alaS</name>
    <name type="ordered locus">MGAS9429_Spy1179</name>
</gene>
<organism>
    <name type="scientific">Streptococcus pyogenes serotype M12 (strain MGAS9429)</name>
    <dbReference type="NCBI Taxonomy" id="370551"/>
    <lineage>
        <taxon>Bacteria</taxon>
        <taxon>Bacillati</taxon>
        <taxon>Bacillota</taxon>
        <taxon>Bacilli</taxon>
        <taxon>Lactobacillales</taxon>
        <taxon>Streptococcaceae</taxon>
        <taxon>Streptococcus</taxon>
    </lineage>
</organism>
<dbReference type="EC" id="6.1.1.7" evidence="1"/>
<dbReference type="EMBL" id="CP000259">
    <property type="protein sequence ID" value="ABF32366.1"/>
    <property type="molecule type" value="Genomic_DNA"/>
</dbReference>
<dbReference type="RefSeq" id="WP_002989217.1">
    <property type="nucleotide sequence ID" value="NC_008021.1"/>
</dbReference>
<dbReference type="SMR" id="Q1JL53"/>
<dbReference type="KEGG" id="spk:MGAS9429_Spy1179"/>
<dbReference type="HOGENOM" id="CLU_004485_1_1_9"/>
<dbReference type="Proteomes" id="UP000002433">
    <property type="component" value="Chromosome"/>
</dbReference>
<dbReference type="GO" id="GO:0005829">
    <property type="term" value="C:cytosol"/>
    <property type="evidence" value="ECO:0007669"/>
    <property type="project" value="TreeGrafter"/>
</dbReference>
<dbReference type="GO" id="GO:0004813">
    <property type="term" value="F:alanine-tRNA ligase activity"/>
    <property type="evidence" value="ECO:0007669"/>
    <property type="project" value="UniProtKB-UniRule"/>
</dbReference>
<dbReference type="GO" id="GO:0002161">
    <property type="term" value="F:aminoacyl-tRNA deacylase activity"/>
    <property type="evidence" value="ECO:0007669"/>
    <property type="project" value="TreeGrafter"/>
</dbReference>
<dbReference type="GO" id="GO:0005524">
    <property type="term" value="F:ATP binding"/>
    <property type="evidence" value="ECO:0007669"/>
    <property type="project" value="UniProtKB-UniRule"/>
</dbReference>
<dbReference type="GO" id="GO:0140096">
    <property type="term" value="F:catalytic activity, acting on a protein"/>
    <property type="evidence" value="ECO:0007669"/>
    <property type="project" value="UniProtKB-ARBA"/>
</dbReference>
<dbReference type="GO" id="GO:0016740">
    <property type="term" value="F:transferase activity"/>
    <property type="evidence" value="ECO:0007669"/>
    <property type="project" value="UniProtKB-ARBA"/>
</dbReference>
<dbReference type="GO" id="GO:0000049">
    <property type="term" value="F:tRNA binding"/>
    <property type="evidence" value="ECO:0007669"/>
    <property type="project" value="UniProtKB-KW"/>
</dbReference>
<dbReference type="GO" id="GO:0008270">
    <property type="term" value="F:zinc ion binding"/>
    <property type="evidence" value="ECO:0007669"/>
    <property type="project" value="UniProtKB-UniRule"/>
</dbReference>
<dbReference type="GO" id="GO:0006419">
    <property type="term" value="P:alanyl-tRNA aminoacylation"/>
    <property type="evidence" value="ECO:0007669"/>
    <property type="project" value="UniProtKB-UniRule"/>
</dbReference>
<dbReference type="CDD" id="cd00673">
    <property type="entry name" value="AlaRS_core"/>
    <property type="match status" value="1"/>
</dbReference>
<dbReference type="FunFam" id="3.10.310.40:FF:000001">
    <property type="entry name" value="Alanine--tRNA ligase"/>
    <property type="match status" value="1"/>
</dbReference>
<dbReference type="FunFam" id="3.30.54.20:FF:000001">
    <property type="entry name" value="Alanine--tRNA ligase"/>
    <property type="match status" value="1"/>
</dbReference>
<dbReference type="FunFam" id="3.30.930.10:FF:000046">
    <property type="entry name" value="Alanine--tRNA ligase"/>
    <property type="match status" value="1"/>
</dbReference>
<dbReference type="FunFam" id="3.30.980.10:FF:000004">
    <property type="entry name" value="Alanine--tRNA ligase, cytoplasmic"/>
    <property type="match status" value="1"/>
</dbReference>
<dbReference type="Gene3D" id="2.40.30.130">
    <property type="match status" value="1"/>
</dbReference>
<dbReference type="Gene3D" id="3.10.310.40">
    <property type="match status" value="1"/>
</dbReference>
<dbReference type="Gene3D" id="3.30.54.20">
    <property type="match status" value="1"/>
</dbReference>
<dbReference type="Gene3D" id="6.10.250.550">
    <property type="match status" value="1"/>
</dbReference>
<dbReference type="Gene3D" id="3.30.930.10">
    <property type="entry name" value="Bira Bifunctional Protein, Domain 2"/>
    <property type="match status" value="1"/>
</dbReference>
<dbReference type="Gene3D" id="3.30.980.10">
    <property type="entry name" value="Threonyl-trna Synthetase, Chain A, domain 2"/>
    <property type="match status" value="1"/>
</dbReference>
<dbReference type="HAMAP" id="MF_00036_B">
    <property type="entry name" value="Ala_tRNA_synth_B"/>
    <property type="match status" value="1"/>
</dbReference>
<dbReference type="InterPro" id="IPR045864">
    <property type="entry name" value="aa-tRNA-synth_II/BPL/LPL"/>
</dbReference>
<dbReference type="InterPro" id="IPR002318">
    <property type="entry name" value="Ala-tRNA-lgiase_IIc"/>
</dbReference>
<dbReference type="InterPro" id="IPR018162">
    <property type="entry name" value="Ala-tRNA-ligase_IIc_anticod-bd"/>
</dbReference>
<dbReference type="InterPro" id="IPR018165">
    <property type="entry name" value="Ala-tRNA-synth_IIc_core"/>
</dbReference>
<dbReference type="InterPro" id="IPR018164">
    <property type="entry name" value="Ala-tRNA-synth_IIc_N"/>
</dbReference>
<dbReference type="InterPro" id="IPR050058">
    <property type="entry name" value="Ala-tRNA_ligase"/>
</dbReference>
<dbReference type="InterPro" id="IPR023033">
    <property type="entry name" value="Ala_tRNA_ligase_euk/bac"/>
</dbReference>
<dbReference type="InterPro" id="IPR003156">
    <property type="entry name" value="DHHA1_dom"/>
</dbReference>
<dbReference type="InterPro" id="IPR018163">
    <property type="entry name" value="Thr/Ala-tRNA-synth_IIc_edit"/>
</dbReference>
<dbReference type="InterPro" id="IPR009000">
    <property type="entry name" value="Transl_B-barrel_sf"/>
</dbReference>
<dbReference type="InterPro" id="IPR012947">
    <property type="entry name" value="tRNA_SAD"/>
</dbReference>
<dbReference type="NCBIfam" id="TIGR00344">
    <property type="entry name" value="alaS"/>
    <property type="match status" value="1"/>
</dbReference>
<dbReference type="PANTHER" id="PTHR11777:SF9">
    <property type="entry name" value="ALANINE--TRNA LIGASE, CYTOPLASMIC"/>
    <property type="match status" value="1"/>
</dbReference>
<dbReference type="PANTHER" id="PTHR11777">
    <property type="entry name" value="ALANYL-TRNA SYNTHETASE"/>
    <property type="match status" value="1"/>
</dbReference>
<dbReference type="Pfam" id="PF02272">
    <property type="entry name" value="DHHA1"/>
    <property type="match status" value="1"/>
</dbReference>
<dbReference type="Pfam" id="PF01411">
    <property type="entry name" value="tRNA-synt_2c"/>
    <property type="match status" value="1"/>
</dbReference>
<dbReference type="Pfam" id="PF07973">
    <property type="entry name" value="tRNA_SAD"/>
    <property type="match status" value="1"/>
</dbReference>
<dbReference type="PRINTS" id="PR00980">
    <property type="entry name" value="TRNASYNTHALA"/>
</dbReference>
<dbReference type="SMART" id="SM00863">
    <property type="entry name" value="tRNA_SAD"/>
    <property type="match status" value="1"/>
</dbReference>
<dbReference type="SUPFAM" id="SSF55681">
    <property type="entry name" value="Class II aaRS and biotin synthetases"/>
    <property type="match status" value="1"/>
</dbReference>
<dbReference type="SUPFAM" id="SSF101353">
    <property type="entry name" value="Putative anticodon-binding domain of alanyl-tRNA synthetase (AlaRS)"/>
    <property type="match status" value="1"/>
</dbReference>
<dbReference type="SUPFAM" id="SSF55186">
    <property type="entry name" value="ThrRS/AlaRS common domain"/>
    <property type="match status" value="1"/>
</dbReference>
<dbReference type="SUPFAM" id="SSF50447">
    <property type="entry name" value="Translation proteins"/>
    <property type="match status" value="1"/>
</dbReference>
<dbReference type="PROSITE" id="PS50860">
    <property type="entry name" value="AA_TRNA_LIGASE_II_ALA"/>
    <property type="match status" value="1"/>
</dbReference>
<keyword id="KW-0030">Aminoacyl-tRNA synthetase</keyword>
<keyword id="KW-0067">ATP-binding</keyword>
<keyword id="KW-0963">Cytoplasm</keyword>
<keyword id="KW-0436">Ligase</keyword>
<keyword id="KW-0479">Metal-binding</keyword>
<keyword id="KW-0547">Nucleotide-binding</keyword>
<keyword id="KW-0648">Protein biosynthesis</keyword>
<keyword id="KW-0694">RNA-binding</keyword>
<keyword id="KW-0820">tRNA-binding</keyword>
<keyword id="KW-0862">Zinc</keyword>